<reference key="1">
    <citation type="journal article" date="2001" name="Am. J. Hum. Genet.">
        <title>Primate DAX1, SRY, and SOX9: evolutionary stratification of sex-determination pathway.</title>
        <authorList>
            <person name="Patel M."/>
            <person name="Dorman K.S."/>
            <person name="Zhang Y.-H."/>
            <person name="Huang B.-L."/>
            <person name="Arnold A.P."/>
            <person name="Sinsheimer J.S."/>
            <person name="Vilain E."/>
            <person name="McCabe E.R.B."/>
        </authorList>
    </citation>
    <scope>NUCLEOTIDE SEQUENCE [MRNA]</scope>
</reference>
<dbReference type="EMBL" id="AF322899">
    <property type="protein sequence ID" value="AAK01650.1"/>
    <property type="molecule type" value="mRNA"/>
</dbReference>
<dbReference type="SMR" id="Q9BG91"/>
<dbReference type="FunCoup" id="Q9BG91">
    <property type="interactions" value="1280"/>
</dbReference>
<dbReference type="STRING" id="9483.ENSCJAP00000067837"/>
<dbReference type="InParanoid" id="Q9BG91"/>
<dbReference type="Proteomes" id="UP000008225">
    <property type="component" value="Unplaced"/>
</dbReference>
<dbReference type="GO" id="GO:0005634">
    <property type="term" value="C:nucleus"/>
    <property type="evidence" value="ECO:0000250"/>
    <property type="project" value="UniProtKB"/>
</dbReference>
<dbReference type="GO" id="GO:0032991">
    <property type="term" value="C:protein-containing complex"/>
    <property type="evidence" value="ECO:0000250"/>
    <property type="project" value="UniProtKB"/>
</dbReference>
<dbReference type="GO" id="GO:0003682">
    <property type="term" value="F:chromatin binding"/>
    <property type="evidence" value="ECO:0000250"/>
    <property type="project" value="UniProtKB"/>
</dbReference>
<dbReference type="GO" id="GO:0000987">
    <property type="term" value="F:cis-regulatory region sequence-specific DNA binding"/>
    <property type="evidence" value="ECO:0000250"/>
    <property type="project" value="UniProtKB"/>
</dbReference>
<dbReference type="GO" id="GO:0003677">
    <property type="term" value="F:DNA binding"/>
    <property type="evidence" value="ECO:0000250"/>
    <property type="project" value="UniProtKB"/>
</dbReference>
<dbReference type="GO" id="GO:0001228">
    <property type="term" value="F:DNA-binding transcription activator activity, RNA polymerase II-specific"/>
    <property type="evidence" value="ECO:0000250"/>
    <property type="project" value="UniProtKB"/>
</dbReference>
<dbReference type="GO" id="GO:0000981">
    <property type="term" value="F:DNA-binding transcription factor activity, RNA polymerase II-specific"/>
    <property type="evidence" value="ECO:0000250"/>
    <property type="project" value="UniProtKB"/>
</dbReference>
<dbReference type="GO" id="GO:0000978">
    <property type="term" value="F:RNA polymerase II cis-regulatory region sequence-specific DNA binding"/>
    <property type="evidence" value="ECO:0000250"/>
    <property type="project" value="UniProtKB"/>
</dbReference>
<dbReference type="GO" id="GO:0043565">
    <property type="term" value="F:sequence-specific DNA binding"/>
    <property type="evidence" value="ECO:0000250"/>
    <property type="project" value="UniProtKB"/>
</dbReference>
<dbReference type="GO" id="GO:0001502">
    <property type="term" value="P:cartilage condensation"/>
    <property type="evidence" value="ECO:0000250"/>
    <property type="project" value="UniProtKB"/>
</dbReference>
<dbReference type="GO" id="GO:0051216">
    <property type="term" value="P:cartilage development"/>
    <property type="evidence" value="ECO:0000250"/>
    <property type="project" value="UniProtKB"/>
</dbReference>
<dbReference type="GO" id="GO:0001708">
    <property type="term" value="P:cell fate specification"/>
    <property type="evidence" value="ECO:0000250"/>
    <property type="project" value="UniProtKB"/>
</dbReference>
<dbReference type="GO" id="GO:0071773">
    <property type="term" value="P:cellular response to BMP stimulus"/>
    <property type="evidence" value="ECO:0000250"/>
    <property type="project" value="UniProtKB"/>
</dbReference>
<dbReference type="GO" id="GO:0071364">
    <property type="term" value="P:cellular response to epidermal growth factor stimulus"/>
    <property type="evidence" value="ECO:0000250"/>
    <property type="project" value="UniProtKB"/>
</dbReference>
<dbReference type="GO" id="GO:0071504">
    <property type="term" value="P:cellular response to heparin"/>
    <property type="evidence" value="ECO:0000250"/>
    <property type="project" value="UniProtKB"/>
</dbReference>
<dbReference type="GO" id="GO:0071260">
    <property type="term" value="P:cellular response to mechanical stimulus"/>
    <property type="evidence" value="ECO:0000250"/>
    <property type="project" value="UniProtKB"/>
</dbReference>
<dbReference type="GO" id="GO:0002062">
    <property type="term" value="P:chondrocyte differentiation"/>
    <property type="evidence" value="ECO:0000250"/>
    <property type="project" value="UniProtKB"/>
</dbReference>
<dbReference type="GO" id="GO:0003413">
    <property type="term" value="P:chondrocyte differentiation involved in endochondral bone morphogenesis"/>
    <property type="evidence" value="ECO:0000250"/>
    <property type="project" value="UniProtKB"/>
</dbReference>
<dbReference type="GO" id="GO:0003415">
    <property type="term" value="P:chondrocyte hypertrophy"/>
    <property type="evidence" value="ECO:0000250"/>
    <property type="project" value="UniProtKB"/>
</dbReference>
<dbReference type="GO" id="GO:0006338">
    <property type="term" value="P:chromatin remodeling"/>
    <property type="evidence" value="ECO:0000250"/>
    <property type="project" value="UniProtKB"/>
</dbReference>
<dbReference type="GO" id="GO:0090103">
    <property type="term" value="P:cochlea morphogenesis"/>
    <property type="evidence" value="ECO:0000250"/>
    <property type="project" value="UniProtKB"/>
</dbReference>
<dbReference type="GO" id="GO:0003203">
    <property type="term" value="P:endocardial cushion morphogenesis"/>
    <property type="evidence" value="ECO:0000250"/>
    <property type="project" value="UniProtKB"/>
</dbReference>
<dbReference type="GO" id="GO:0007173">
    <property type="term" value="P:epidermal growth factor receptor signaling pathway"/>
    <property type="evidence" value="ECO:0000250"/>
    <property type="project" value="UniProtKB"/>
</dbReference>
<dbReference type="GO" id="GO:0060517">
    <property type="term" value="P:epithelial cell proliferation involved in prostatic bud elongation"/>
    <property type="evidence" value="ECO:0000250"/>
    <property type="project" value="UniProtKB"/>
</dbReference>
<dbReference type="GO" id="GO:0001837">
    <property type="term" value="P:epithelial to mesenchymal transition"/>
    <property type="evidence" value="ECO:0000250"/>
    <property type="project" value="UniProtKB"/>
</dbReference>
<dbReference type="GO" id="GO:0070371">
    <property type="term" value="P:ERK1 and ERK2 cascade"/>
    <property type="evidence" value="ECO:0000250"/>
    <property type="project" value="UniProtKB"/>
</dbReference>
<dbReference type="GO" id="GO:0003430">
    <property type="term" value="P:growth plate cartilage chondrocyte growth"/>
    <property type="evidence" value="ECO:0000250"/>
    <property type="project" value="UniProtKB"/>
</dbReference>
<dbReference type="GO" id="GO:0001942">
    <property type="term" value="P:hair follicle development"/>
    <property type="evidence" value="ECO:0000250"/>
    <property type="project" value="UniProtKB"/>
</dbReference>
<dbReference type="GO" id="GO:0003170">
    <property type="term" value="P:heart valve development"/>
    <property type="evidence" value="ECO:0000250"/>
    <property type="project" value="UniProtKB"/>
</dbReference>
<dbReference type="GO" id="GO:0003179">
    <property type="term" value="P:heart valve morphogenesis"/>
    <property type="evidence" value="ECO:0000250"/>
    <property type="project" value="UniProtKB"/>
</dbReference>
<dbReference type="GO" id="GO:0060729">
    <property type="term" value="P:intestinal epithelial structure maintenance"/>
    <property type="evidence" value="ECO:0000250"/>
    <property type="project" value="UniProtKB"/>
</dbReference>
<dbReference type="GO" id="GO:0019100">
    <property type="term" value="P:male germ-line sex determination"/>
    <property type="evidence" value="ECO:0000250"/>
    <property type="project" value="UniProtKB"/>
</dbReference>
<dbReference type="GO" id="GO:0072289">
    <property type="term" value="P:metanephric nephron tubule formation"/>
    <property type="evidence" value="ECO:0000250"/>
    <property type="project" value="UniProtKB"/>
</dbReference>
<dbReference type="GO" id="GO:0061138">
    <property type="term" value="P:morphogenesis of a branching epithelium"/>
    <property type="evidence" value="ECO:0000250"/>
    <property type="project" value="UniProtKB"/>
</dbReference>
<dbReference type="GO" id="GO:0043066">
    <property type="term" value="P:negative regulation of apoptotic process"/>
    <property type="evidence" value="ECO:0000250"/>
    <property type="project" value="UniProtKB"/>
</dbReference>
<dbReference type="GO" id="GO:0070168">
    <property type="term" value="P:negative regulation of biomineral tissue development"/>
    <property type="evidence" value="ECO:0000250"/>
    <property type="project" value="UniProtKB"/>
</dbReference>
<dbReference type="GO" id="GO:0090090">
    <property type="term" value="P:negative regulation of canonical Wnt signaling pathway"/>
    <property type="evidence" value="ECO:0000250"/>
    <property type="project" value="UniProtKB"/>
</dbReference>
<dbReference type="GO" id="GO:0032331">
    <property type="term" value="P:negative regulation of chondrocyte differentiation"/>
    <property type="evidence" value="ECO:0000250"/>
    <property type="project" value="UniProtKB"/>
</dbReference>
<dbReference type="GO" id="GO:0045892">
    <property type="term" value="P:negative regulation of DNA-templated transcription"/>
    <property type="evidence" value="ECO:0000250"/>
    <property type="project" value="UniProtKB"/>
</dbReference>
<dbReference type="GO" id="GO:0050680">
    <property type="term" value="P:negative regulation of epithelial cell proliferation"/>
    <property type="evidence" value="ECO:0000250"/>
    <property type="project" value="UniProtKB"/>
</dbReference>
<dbReference type="GO" id="GO:0046322">
    <property type="term" value="P:negative regulation of fatty acid oxidation"/>
    <property type="evidence" value="ECO:0000250"/>
    <property type="project" value="UniProtKB"/>
</dbReference>
<dbReference type="GO" id="GO:0002683">
    <property type="term" value="P:negative regulation of immune system process"/>
    <property type="evidence" value="ECO:0000250"/>
    <property type="project" value="UniProtKB"/>
</dbReference>
<dbReference type="GO" id="GO:0045662">
    <property type="term" value="P:negative regulation of myoblast differentiation"/>
    <property type="evidence" value="ECO:0000250"/>
    <property type="project" value="UniProtKB"/>
</dbReference>
<dbReference type="GO" id="GO:0030279">
    <property type="term" value="P:negative regulation of ossification"/>
    <property type="evidence" value="ECO:0000250"/>
    <property type="project" value="UniProtKB"/>
</dbReference>
<dbReference type="GO" id="GO:0045668">
    <property type="term" value="P:negative regulation of osteoblast differentiation"/>
    <property type="evidence" value="ECO:0000250"/>
    <property type="project" value="UniProtKB"/>
</dbReference>
<dbReference type="GO" id="GO:0046533">
    <property type="term" value="P:negative regulation of photoreceptor cell differentiation"/>
    <property type="evidence" value="ECO:0000250"/>
    <property type="project" value="UniProtKB"/>
</dbReference>
<dbReference type="GO" id="GO:0000122">
    <property type="term" value="P:negative regulation of transcription by RNA polymerase II"/>
    <property type="evidence" value="ECO:0007669"/>
    <property type="project" value="TreeGrafter"/>
</dbReference>
<dbReference type="GO" id="GO:0014036">
    <property type="term" value="P:neural crest cell fate specification"/>
    <property type="evidence" value="ECO:0000250"/>
    <property type="project" value="UniProtKB"/>
</dbReference>
<dbReference type="GO" id="GO:0006334">
    <property type="term" value="P:nucleosome assembly"/>
    <property type="evidence" value="ECO:0000250"/>
    <property type="project" value="UniProtKB"/>
</dbReference>
<dbReference type="GO" id="GO:0048709">
    <property type="term" value="P:oligodendrocyte differentiation"/>
    <property type="evidence" value="ECO:0007669"/>
    <property type="project" value="TreeGrafter"/>
</dbReference>
<dbReference type="GO" id="GO:0030916">
    <property type="term" value="P:otic vesicle formation"/>
    <property type="evidence" value="ECO:0000250"/>
    <property type="project" value="UniProtKB"/>
</dbReference>
<dbReference type="GO" id="GO:0090190">
    <property type="term" value="P:positive regulation of branching involved in ureteric bud morphogenesis"/>
    <property type="evidence" value="ECO:0000250"/>
    <property type="project" value="UniProtKB"/>
</dbReference>
<dbReference type="GO" id="GO:0008284">
    <property type="term" value="P:positive regulation of cell population proliferation"/>
    <property type="evidence" value="ECO:0000250"/>
    <property type="project" value="UniProtKB"/>
</dbReference>
<dbReference type="GO" id="GO:0032332">
    <property type="term" value="P:positive regulation of chondrocyte differentiation"/>
    <property type="evidence" value="ECO:0000250"/>
    <property type="project" value="UniProtKB"/>
</dbReference>
<dbReference type="GO" id="GO:0030858">
    <property type="term" value="P:positive regulation of epithelial cell differentiation"/>
    <property type="evidence" value="ECO:0000250"/>
    <property type="project" value="UniProtKB"/>
</dbReference>
<dbReference type="GO" id="GO:0010634">
    <property type="term" value="P:positive regulation of epithelial cell migration"/>
    <property type="evidence" value="ECO:0000250"/>
    <property type="project" value="UniProtKB"/>
</dbReference>
<dbReference type="GO" id="GO:0050679">
    <property type="term" value="P:positive regulation of epithelial cell proliferation"/>
    <property type="evidence" value="ECO:0000250"/>
    <property type="project" value="UniProtKB"/>
</dbReference>
<dbReference type="GO" id="GO:0010628">
    <property type="term" value="P:positive regulation of gene expression"/>
    <property type="evidence" value="ECO:0000250"/>
    <property type="project" value="UniProtKB"/>
</dbReference>
<dbReference type="GO" id="GO:0090184">
    <property type="term" value="P:positive regulation of kidney development"/>
    <property type="evidence" value="ECO:0000250"/>
    <property type="project" value="UniProtKB"/>
</dbReference>
<dbReference type="GO" id="GO:2000020">
    <property type="term" value="P:positive regulation of male gonad development"/>
    <property type="evidence" value="ECO:0000250"/>
    <property type="project" value="UniProtKB"/>
</dbReference>
<dbReference type="GO" id="GO:0002053">
    <property type="term" value="P:positive regulation of mesenchymal cell proliferation"/>
    <property type="evidence" value="ECO:0000250"/>
    <property type="project" value="UniProtKB"/>
</dbReference>
<dbReference type="GO" id="GO:2000741">
    <property type="term" value="P:positive regulation of mesenchymal stem cell differentiation"/>
    <property type="evidence" value="ECO:0000250"/>
    <property type="project" value="UniProtKB"/>
</dbReference>
<dbReference type="GO" id="GO:0045944">
    <property type="term" value="P:positive regulation of transcription by RNA polymerase II"/>
    <property type="evidence" value="ECO:0000250"/>
    <property type="project" value="UniProtKB"/>
</dbReference>
<dbReference type="GO" id="GO:0065003">
    <property type="term" value="P:protein-containing complex assembly"/>
    <property type="evidence" value="ECO:0000250"/>
    <property type="project" value="UniProtKB"/>
</dbReference>
<dbReference type="GO" id="GO:0042981">
    <property type="term" value="P:regulation of apoptotic process"/>
    <property type="evidence" value="ECO:0000250"/>
    <property type="project" value="UniProtKB"/>
</dbReference>
<dbReference type="GO" id="GO:0061035">
    <property type="term" value="P:regulation of cartilage development"/>
    <property type="evidence" value="ECO:0000250"/>
    <property type="project" value="UniProtKB"/>
</dbReference>
<dbReference type="GO" id="GO:0010564">
    <property type="term" value="P:regulation of cell cycle process"/>
    <property type="evidence" value="ECO:0000250"/>
    <property type="project" value="UniProtKB"/>
</dbReference>
<dbReference type="GO" id="GO:0042127">
    <property type="term" value="P:regulation of cell population proliferation"/>
    <property type="evidence" value="ECO:0000250"/>
    <property type="project" value="UniProtKB"/>
</dbReference>
<dbReference type="GO" id="GO:0060784">
    <property type="term" value="P:regulation of cell proliferation involved in tissue homeostasis"/>
    <property type="evidence" value="ECO:0000250"/>
    <property type="project" value="UniProtKB"/>
</dbReference>
<dbReference type="GO" id="GO:0072034">
    <property type="term" value="P:renal vesicle induction"/>
    <property type="evidence" value="ECO:0000250"/>
    <property type="project" value="UniProtKB"/>
</dbReference>
<dbReference type="GO" id="GO:0070542">
    <property type="term" value="P:response to fatty acid"/>
    <property type="evidence" value="ECO:0000250"/>
    <property type="project" value="UniProtKB"/>
</dbReference>
<dbReference type="GO" id="GO:0060041">
    <property type="term" value="P:retina development in camera-type eye"/>
    <property type="evidence" value="ECO:0000250"/>
    <property type="project" value="UniProtKB"/>
</dbReference>
<dbReference type="GO" id="GO:0060221">
    <property type="term" value="P:retinal rod cell differentiation"/>
    <property type="evidence" value="ECO:0000250"/>
    <property type="project" value="UniProtKB"/>
</dbReference>
<dbReference type="GO" id="GO:0060008">
    <property type="term" value="P:Sertoli cell differentiation"/>
    <property type="evidence" value="ECO:0000250"/>
    <property type="project" value="UniProtKB"/>
</dbReference>
<dbReference type="GO" id="GO:0007165">
    <property type="term" value="P:signal transduction"/>
    <property type="evidence" value="ECO:0000250"/>
    <property type="project" value="UniProtKB"/>
</dbReference>
<dbReference type="GO" id="GO:0001501">
    <property type="term" value="P:skeletal system development"/>
    <property type="evidence" value="ECO:0000250"/>
    <property type="project" value="UniProtKB"/>
</dbReference>
<dbReference type="GO" id="GO:0035019">
    <property type="term" value="P:somatic stem cell population maintenance"/>
    <property type="evidence" value="ECO:0000250"/>
    <property type="project" value="UniProtKB"/>
</dbReference>
<dbReference type="GO" id="GO:0007283">
    <property type="term" value="P:spermatogenesis"/>
    <property type="evidence" value="ECO:0000250"/>
    <property type="project" value="UniProtKB"/>
</dbReference>
<dbReference type="GO" id="GO:0001894">
    <property type="term" value="P:tissue homeostasis"/>
    <property type="evidence" value="ECO:0000250"/>
    <property type="project" value="UniProtKB"/>
</dbReference>
<dbReference type="CDD" id="cd22031">
    <property type="entry name" value="HMG-box_SoxE"/>
    <property type="match status" value="1"/>
</dbReference>
<dbReference type="FunFam" id="1.10.30.10:FF:000004">
    <property type="entry name" value="Transcription factor SOX-10"/>
    <property type="match status" value="1"/>
</dbReference>
<dbReference type="Gene3D" id="1.10.30.10">
    <property type="entry name" value="High mobility group box domain"/>
    <property type="match status" value="1"/>
</dbReference>
<dbReference type="InterPro" id="IPR009071">
    <property type="entry name" value="HMG_box_dom"/>
</dbReference>
<dbReference type="InterPro" id="IPR036910">
    <property type="entry name" value="HMG_box_dom_sf"/>
</dbReference>
<dbReference type="InterPro" id="IPR022151">
    <property type="entry name" value="Sox_N"/>
</dbReference>
<dbReference type="InterPro" id="IPR050917">
    <property type="entry name" value="SOX_TF"/>
</dbReference>
<dbReference type="PANTHER" id="PTHR45803">
    <property type="entry name" value="SOX100B"/>
    <property type="match status" value="1"/>
</dbReference>
<dbReference type="PANTHER" id="PTHR45803:SF1">
    <property type="entry name" value="TRANSCRIPTION FACTOR SOX-9"/>
    <property type="match status" value="1"/>
</dbReference>
<dbReference type="Pfam" id="PF00505">
    <property type="entry name" value="HMG_box"/>
    <property type="match status" value="1"/>
</dbReference>
<dbReference type="Pfam" id="PF12444">
    <property type="entry name" value="Sox_N"/>
    <property type="match status" value="1"/>
</dbReference>
<dbReference type="SMART" id="SM00398">
    <property type="entry name" value="HMG"/>
    <property type="match status" value="1"/>
</dbReference>
<dbReference type="SUPFAM" id="SSF47095">
    <property type="entry name" value="HMG-box"/>
    <property type="match status" value="1"/>
</dbReference>
<dbReference type="PROSITE" id="PS50118">
    <property type="entry name" value="HMG_BOX_2"/>
    <property type="match status" value="1"/>
</dbReference>
<protein>
    <recommendedName>
        <fullName evidence="5">Transcription factor SOX-9</fullName>
    </recommendedName>
</protein>
<sequence>MNLLDPFMKMTDEQEKGLSGAPSPTMSEDSAGSPCPSGSGSDTENTRPQENTFPKGEPDLKKESEEDKFPVCIREAVSQVLKGYDWTLVPMPVRVNGSSKNKPHVKRPMNAFMVWAQAARRKLADQYPHLHNAELSKTLGKLWRLLNESEKRPFVEEAERLRVQHKKDHPDYKYQPRRRKSVKNGQAEAEEATEQTHISPNAIFKALQADSPHSSSGMSEVHSPGEHSGQSQGPPTPPTTPKTDVQPGKADLKREGRPLPEGGRQPPIDFRDVDIGELSSDVISNIETFDVNEFDQYLPPNGHPGVPATHGQVTYTGSYGISSTAATPAGAGHVWMSKQQAPPPPPQQPPQAPPAPQAPPQPQAAPPQQPAAPPQQPQAHTLTTLSSEPGQSQRTHIKTEQLSPSHYSEQQQHSPQQIAYSPFNLPHYSPSYPPITRSQYDYTDHQNSSSYYSHAAGQGTGLYSTFTYMNPAQRPMYTPIADTSGVPSIPQTHSPQHWEQPVYTQLTRP</sequence>
<organism>
    <name type="scientific">Callithrix jacchus</name>
    <name type="common">White-tufted-ear marmoset</name>
    <dbReference type="NCBI Taxonomy" id="9483"/>
    <lineage>
        <taxon>Eukaryota</taxon>
        <taxon>Metazoa</taxon>
        <taxon>Chordata</taxon>
        <taxon>Craniata</taxon>
        <taxon>Vertebrata</taxon>
        <taxon>Euteleostomi</taxon>
        <taxon>Mammalia</taxon>
        <taxon>Eutheria</taxon>
        <taxon>Euarchontoglires</taxon>
        <taxon>Primates</taxon>
        <taxon>Haplorrhini</taxon>
        <taxon>Platyrrhini</taxon>
        <taxon>Cebidae</taxon>
        <taxon>Callitrichinae</taxon>
        <taxon>Callithrix</taxon>
        <taxon>Callithrix</taxon>
    </lineage>
</organism>
<feature type="chain" id="PRO_0000048737" description="Transcription factor SOX-9">
    <location>
        <begin position="1"/>
        <end position="509"/>
    </location>
</feature>
<feature type="DNA-binding region" description="HMG box" evidence="3">
    <location>
        <begin position="105"/>
        <end position="173"/>
    </location>
</feature>
<feature type="region of interest" description="Disordered" evidence="4">
    <location>
        <begin position="1"/>
        <end position="67"/>
    </location>
</feature>
<feature type="region of interest" description="Dimerization (DIM)" evidence="1">
    <location>
        <begin position="63"/>
        <end position="103"/>
    </location>
</feature>
<feature type="region of interest" description="PQA" evidence="1">
    <location>
        <begin position="63"/>
        <end position="103"/>
    </location>
</feature>
<feature type="region of interest" description="Disordered" evidence="4">
    <location>
        <begin position="160"/>
        <end position="273"/>
    </location>
</feature>
<feature type="region of interest" description="Transactivation domain (TAM)" evidence="1">
    <location>
        <begin position="224"/>
        <end position="307"/>
    </location>
</feature>
<feature type="region of interest" description="Disordered" evidence="4">
    <location>
        <begin position="334"/>
        <end position="415"/>
    </location>
</feature>
<feature type="region of interest" description="Transactivation domain (TAC)" evidence="1">
    <location>
        <begin position="394"/>
        <end position="509"/>
    </location>
</feature>
<feature type="region of interest" description="Disordered" evidence="4">
    <location>
        <begin position="479"/>
        <end position="509"/>
    </location>
</feature>
<feature type="short sequence motif" description="9aaTAD 1" evidence="1">
    <location>
        <begin position="275"/>
        <end position="284"/>
    </location>
</feature>
<feature type="short sequence motif" description="9aaTAD 2" evidence="1">
    <location>
        <begin position="290"/>
        <end position="298"/>
    </location>
</feature>
<feature type="short sequence motif" description="9aaTAD 3" evidence="1">
    <location>
        <begin position="460"/>
        <end position="468"/>
    </location>
</feature>
<feature type="compositionally biased region" description="Low complexity" evidence="4">
    <location>
        <begin position="30"/>
        <end position="41"/>
    </location>
</feature>
<feature type="compositionally biased region" description="Polar residues" evidence="4">
    <location>
        <begin position="42"/>
        <end position="52"/>
    </location>
</feature>
<feature type="compositionally biased region" description="Basic and acidic residues" evidence="4">
    <location>
        <begin position="56"/>
        <end position="67"/>
    </location>
</feature>
<feature type="compositionally biased region" description="Basic and acidic residues" evidence="4">
    <location>
        <begin position="160"/>
        <end position="174"/>
    </location>
</feature>
<feature type="compositionally biased region" description="Pro residues" evidence="4">
    <location>
        <begin position="341"/>
        <end position="376"/>
    </location>
</feature>
<feature type="compositionally biased region" description="Polar residues" evidence="4">
    <location>
        <begin position="380"/>
        <end position="415"/>
    </location>
</feature>
<feature type="compositionally biased region" description="Polar residues" evidence="4">
    <location>
        <begin position="485"/>
        <end position="509"/>
    </location>
</feature>
<feature type="modified residue" description="Phosphoserine" evidence="2">
    <location>
        <position position="64"/>
    </location>
</feature>
<feature type="modified residue" description="Phosphoserine" evidence="2">
    <location>
        <position position="211"/>
    </location>
</feature>
<feature type="cross-link" description="Glycyl lysine isopeptide (Lys-Gly) (interchain with G-Cter in ubiquitin)" evidence="2">
    <location>
        <position position="398"/>
    </location>
</feature>
<keyword id="KW-0007">Acetylation</keyword>
<keyword id="KW-0010">Activator</keyword>
<keyword id="KW-0221">Differentiation</keyword>
<keyword id="KW-0238">DNA-binding</keyword>
<keyword id="KW-1017">Isopeptide bond</keyword>
<keyword id="KW-0539">Nucleus</keyword>
<keyword id="KW-0597">Phosphoprotein</keyword>
<keyword id="KW-1185">Reference proteome</keyword>
<keyword id="KW-0804">Transcription</keyword>
<keyword id="KW-0805">Transcription regulation</keyword>
<keyword id="KW-0832">Ubl conjugation</keyword>
<gene>
    <name type="primary">SOX9</name>
</gene>
<name>SOX9_CALJA</name>
<proteinExistence type="evidence at transcript level"/>
<accession>Q9BG91</accession>
<comment type="function">
    <text evidence="2">Transcription factor that plays a key role in chondrocytes differentiation and skeletal development. Specifically binds the 5'-ACAAAG-3' DNA motif present in enhancers and super-enhancers and promotes expression of genes important for chondrogenesis, including cartilage matrix protein-coding genes COL2A1, COL4A2, COL9A1, COL11A2 and ACAN, SOX5 and SOX6. Also binds to some promoter regions. Plays a central role in successive steps of chondrocyte differentiation. Absolutely required for precartilaginous condensation, the first step in chondrogenesis during which skeletal progenitors differentiate into prechondrocytes. Together with SOX5 and SOX6, required for overt chondrogenesis when condensed prechondrocytes differentiate into early stage chondrocytes, the second step in chondrogenesis. Later, required to direct hypertrophic maturation and block osteoblast differentiation of growth plate chondrocytes: maintains chondrocyte columnar proliferation, delays prehypertrophy and then prevents osteoblastic differentiation of chondrocytes by lowering beta-catenin (CTNNB1) signaling and RUNX2 expression. Also required for chondrocyte hypertrophy, both indirectly, by keeping the lineage fate of chondrocytes, and directly, by remaining present in upper hypertrophic cells and transactivating COL10A1 along with MEF2C. Low lipid levels are the main nutritional determinant for chondrogenic commitment of skeletal progenitor cells: when lipids levels are low, FOXO (FOXO1 and FOXO3) transcription factors promote expression of SOX9, which induces chondrogenic commitment and suppresses fatty acid oxidation. Mechanistically, helps, but is not required, to remove epigenetic signatures of transcriptional repression and deposit active promoter and enhancer marks at chondrocyte-specific genes. Acts in cooperation with the Hedgehog pathway-dependent GLI (GLI1 and GLI3) transcription factors. In addition to cartilage development, also acts as a regulator of proliferation and differentiation in epithelial stem/progenitor cells: involved in the lung epithelium during branching morphogenesis, by balancing proliferation and differentiation and regulating the extracellular matrix. Controls epithelial branching during kidney development.</text>
</comment>
<comment type="subunit">
    <text evidence="1 2">Homodimer; homodimerization is required for activity. Interacts (via C-terminus) with ZNF219; forming a complex that binds to the COL2A1 promoter and activates COL2A1 expression (By similarity). Interacts with DDRGK1. Interacts with EP300/p300 (By similarity). Interacts with beta-catenin (CTNNB1); inhibiting CTNNB1 activity by competing with the binding sites of TCF/LEF within CTNNB1 (By similarity).</text>
</comment>
<comment type="subcellular location">
    <subcellularLocation>
        <location evidence="2 3">Nucleus</location>
    </subcellularLocation>
</comment>
<comment type="domain">
    <text evidence="1">The transactivation domains TAM and TAC (for transactivation domain in the middle and at the C-terminus, respectively) are required to contact transcriptional coactivators and basal transcriptional machinery components and thereby induce gene transactivation.</text>
</comment>
<comment type="domain">
    <text evidence="1">The 9aaTAD motif is a transactivation domain present in a large number of yeast and animal transcription factors.</text>
</comment>
<comment type="domain">
    <text evidence="1">The PQA region (for proline, glutamine and alanine-rich) helps stabilize SOX9 and facilitates transactivation. It lacks intrinsic transactivation capability.</text>
</comment>
<comment type="PTM">
    <text evidence="2">Acetylated; acetylation impairs nuclear localization and ability to transactivate expression of target genes. Deacetylated by SIRT1.</text>
</comment>
<comment type="PTM">
    <text evidence="2">Phosphorylation at Ser-64 and Ser-211 by PKA increases transcriptional activity and may help delay chondrocyte maturation downstream of PTHLH/PTHrP signaling. Phosphorylation at either Ser-64 or Ser-211 is required for sumoylation, but phosphorylation is not dependent on sumoylation. Phosphorylated on tyrosine residues; tyrosine dephosphorylation by PTPN11/SHP2 blocks SOX9 phosphorylation by PKA and subsequent SUMOylation.</text>
</comment>
<comment type="PTM">
    <text evidence="2">Sumoylated; phosphorylation at either Ser-64 or Ser-211 is required for sumoylation. Sumoylation is induced by BMP signaling pathway.</text>
</comment>
<comment type="PTM">
    <text evidence="2">Ubiquitinated; ubiquitination leads to proteasomal degradation and is negatively regulated by DDRGK1.</text>
</comment>
<evidence type="ECO:0000250" key="1">
    <source>
        <dbReference type="UniProtKB" id="P48436"/>
    </source>
</evidence>
<evidence type="ECO:0000250" key="2">
    <source>
        <dbReference type="UniProtKB" id="Q04887"/>
    </source>
</evidence>
<evidence type="ECO:0000255" key="3">
    <source>
        <dbReference type="PROSITE-ProRule" id="PRU00267"/>
    </source>
</evidence>
<evidence type="ECO:0000256" key="4">
    <source>
        <dbReference type="SAM" id="MobiDB-lite"/>
    </source>
</evidence>
<evidence type="ECO:0000305" key="5"/>